<gene>
    <name evidence="1" type="primary">pgi</name>
    <name type="ordered locus">ZMO1212</name>
</gene>
<keyword id="KW-0963">Cytoplasm</keyword>
<keyword id="KW-0312">Gluconeogenesis</keyword>
<keyword id="KW-0324">Glycolysis</keyword>
<keyword id="KW-0413">Isomerase</keyword>
<keyword id="KW-1185">Reference proteome</keyword>
<organism>
    <name type="scientific">Zymomonas mobilis subsp. mobilis (strain ATCC 31821 / ZM4 / CP4)</name>
    <dbReference type="NCBI Taxonomy" id="264203"/>
    <lineage>
        <taxon>Bacteria</taxon>
        <taxon>Pseudomonadati</taxon>
        <taxon>Pseudomonadota</taxon>
        <taxon>Alphaproteobacteria</taxon>
        <taxon>Sphingomonadales</taxon>
        <taxon>Zymomonadaceae</taxon>
        <taxon>Zymomonas</taxon>
    </lineage>
</organism>
<evidence type="ECO:0000255" key="1">
    <source>
        <dbReference type="HAMAP-Rule" id="MF_00473"/>
    </source>
</evidence>
<evidence type="ECO:0000305" key="2"/>
<feature type="chain" id="PRO_0000180777" description="Glucose-6-phosphate isomerase">
    <location>
        <begin position="1"/>
        <end position="507"/>
    </location>
</feature>
<feature type="active site" description="Proton donor" evidence="1">
    <location>
        <position position="338"/>
    </location>
</feature>
<feature type="active site" evidence="1">
    <location>
        <position position="369"/>
    </location>
</feature>
<feature type="active site" evidence="1">
    <location>
        <position position="479"/>
    </location>
</feature>
<sequence>MARIANKAAIDAAWKQVSACSEKTLKQLFEEDSNRLSGLVVETAKLRFDFSKNHLDSQKLTAFKKLLEACDFDARRKALFAGEKINITEDRAVEHMAERGQGAPASVARAKEYHARMRTLIEAIDAGAFGEVKHLLHIGIGGSALGPKLLIDALTRESGRYDVAVVSNVDGQALEEVFKKFNPHKTLIAVASKTFTTAETMLNAESAMEWMKKHGVEDPQGRMIALTANPAKASEMGIDDTRILPFAESIGGRYSLWSSIGFPAALALGWEGFQQLLEGGAAMDRHFLEAAPEKNAPILAAFADQYYSAVRGAQTHGIFAYDERLQLLPFYLQQLEMESNGKRVDLDGNLIDHPSAFITWGGVGTDAQHAVFQLLHQGTRLVPIEFIAAIKADDTLNPVHHKTLLTNAFAQGAALMSGRDNKDPARSYPGDRPSTTILMEELRPAQLGALIAFYEHRTFTNGVLLGINSFDQFGVELGKEMAHAIADHPENSDFDPSTKALIAAALK</sequence>
<name>G6PI_ZYMMO</name>
<protein>
    <recommendedName>
        <fullName evidence="1">Glucose-6-phosphate isomerase</fullName>
        <shortName evidence="1">GPI</shortName>
        <ecNumber evidence="1">5.3.1.9</ecNumber>
    </recommendedName>
    <alternativeName>
        <fullName evidence="1">Phosphoglucose isomerase</fullName>
        <shortName evidence="1">PGI</shortName>
    </alternativeName>
    <alternativeName>
        <fullName evidence="1">Phosphohexose isomerase</fullName>
        <shortName evidence="1">PHI</shortName>
    </alternativeName>
</protein>
<reference key="1">
    <citation type="journal article" date="1991" name="J. Bacteriol.">
        <title>Cloning, characterization, and nucleotide sequence analysis of a Zymomonas mobilis phosphoglucose isomerase gene that is subject to carbon source-dependent regulation.</title>
        <authorList>
            <person name="Hesman T.L."/>
            <person name="Barnell W.O."/>
            <person name="Conway T."/>
        </authorList>
    </citation>
    <scope>NUCLEOTIDE SEQUENCE [GENOMIC DNA]</scope>
</reference>
<reference key="2">
    <citation type="journal article" date="2005" name="Nat. Biotechnol.">
        <title>The genome sequence of the ethanologenic bacterium Zymomonas mobilis ZM4.</title>
        <authorList>
            <person name="Seo J.-S."/>
            <person name="Chong H."/>
            <person name="Park H.S."/>
            <person name="Yoon K.-O."/>
            <person name="Jung C."/>
            <person name="Kim J.J."/>
            <person name="Hong J.H."/>
            <person name="Kim H."/>
            <person name="Kim J.-H."/>
            <person name="Kil J.-I."/>
            <person name="Park C.J."/>
            <person name="Oh H.-M."/>
            <person name="Lee J.-S."/>
            <person name="Jin S.-J."/>
            <person name="Um H.-W."/>
            <person name="Lee H.-J."/>
            <person name="Oh S.-J."/>
            <person name="Kim J.Y."/>
            <person name="Kang H.L."/>
            <person name="Lee S.Y."/>
            <person name="Lee K.J."/>
            <person name="Kang H.S."/>
        </authorList>
    </citation>
    <scope>NUCLEOTIDE SEQUENCE [LARGE SCALE GENOMIC DNA]</scope>
    <source>
        <strain>ATCC 31821 / ZM4 / CP4</strain>
    </source>
</reference>
<accession>P28718</accession>
<accession>Q5NN74</accession>
<comment type="function">
    <text>Provides a gateway for fructose into the Entner-Doudouroff pathway.</text>
</comment>
<comment type="function">
    <text evidence="1">Catalyzes the reversible isomerization of glucose-6-phosphate to fructose-6-phosphate.</text>
</comment>
<comment type="catalytic activity">
    <reaction evidence="1">
        <text>alpha-D-glucose 6-phosphate = beta-D-fructose 6-phosphate</text>
        <dbReference type="Rhea" id="RHEA:11816"/>
        <dbReference type="ChEBI" id="CHEBI:57634"/>
        <dbReference type="ChEBI" id="CHEBI:58225"/>
        <dbReference type="EC" id="5.3.1.9"/>
    </reaction>
</comment>
<comment type="pathway">
    <text evidence="1">Carbohydrate biosynthesis; gluconeogenesis.</text>
</comment>
<comment type="pathway">
    <text evidence="1">Carbohydrate degradation; glycolysis; D-glyceraldehyde 3-phosphate and glycerone phosphate from D-glucose: step 2/4.</text>
</comment>
<comment type="subcellular location">
    <subcellularLocation>
        <location evidence="1">Cytoplasm</location>
    </subcellularLocation>
</comment>
<comment type="similarity">
    <text evidence="1 2">Belongs to the GPI family.</text>
</comment>
<proteinExistence type="inferred from homology"/>
<dbReference type="EC" id="5.3.1.9" evidence="1"/>
<dbReference type="EMBL" id="M62957">
    <property type="protein sequence ID" value="AAA27698.1"/>
    <property type="molecule type" value="Genomic_DNA"/>
</dbReference>
<dbReference type="EMBL" id="AE008692">
    <property type="protein sequence ID" value="AAV89836.1"/>
    <property type="molecule type" value="Genomic_DNA"/>
</dbReference>
<dbReference type="PIR" id="A39411">
    <property type="entry name" value="A39411"/>
</dbReference>
<dbReference type="RefSeq" id="WP_011241031.1">
    <property type="nucleotide sequence ID" value="NC_006526.2"/>
</dbReference>
<dbReference type="SMR" id="P28718"/>
<dbReference type="STRING" id="264203.ZMO1212"/>
<dbReference type="GeneID" id="79903666"/>
<dbReference type="KEGG" id="zmo:ZMO1212"/>
<dbReference type="eggNOG" id="COG0166">
    <property type="taxonomic scope" value="Bacteria"/>
</dbReference>
<dbReference type="HOGENOM" id="CLU_017947_3_1_5"/>
<dbReference type="UniPathway" id="UPA00109">
    <property type="reaction ID" value="UER00181"/>
</dbReference>
<dbReference type="UniPathway" id="UPA00138"/>
<dbReference type="Proteomes" id="UP000001173">
    <property type="component" value="Chromosome"/>
</dbReference>
<dbReference type="GO" id="GO:0005829">
    <property type="term" value="C:cytosol"/>
    <property type="evidence" value="ECO:0007669"/>
    <property type="project" value="TreeGrafter"/>
</dbReference>
<dbReference type="GO" id="GO:0097367">
    <property type="term" value="F:carbohydrate derivative binding"/>
    <property type="evidence" value="ECO:0007669"/>
    <property type="project" value="InterPro"/>
</dbReference>
<dbReference type="GO" id="GO:0004347">
    <property type="term" value="F:glucose-6-phosphate isomerase activity"/>
    <property type="evidence" value="ECO:0007669"/>
    <property type="project" value="UniProtKB-UniRule"/>
</dbReference>
<dbReference type="GO" id="GO:0048029">
    <property type="term" value="F:monosaccharide binding"/>
    <property type="evidence" value="ECO:0007669"/>
    <property type="project" value="TreeGrafter"/>
</dbReference>
<dbReference type="GO" id="GO:0006094">
    <property type="term" value="P:gluconeogenesis"/>
    <property type="evidence" value="ECO:0007669"/>
    <property type="project" value="UniProtKB-UniRule"/>
</dbReference>
<dbReference type="GO" id="GO:0051156">
    <property type="term" value="P:glucose 6-phosphate metabolic process"/>
    <property type="evidence" value="ECO:0007669"/>
    <property type="project" value="TreeGrafter"/>
</dbReference>
<dbReference type="GO" id="GO:0006096">
    <property type="term" value="P:glycolytic process"/>
    <property type="evidence" value="ECO:0007669"/>
    <property type="project" value="UniProtKB-UniRule"/>
</dbReference>
<dbReference type="CDD" id="cd05015">
    <property type="entry name" value="SIS_PGI_1"/>
    <property type="match status" value="1"/>
</dbReference>
<dbReference type="CDD" id="cd05016">
    <property type="entry name" value="SIS_PGI_2"/>
    <property type="match status" value="1"/>
</dbReference>
<dbReference type="Gene3D" id="1.10.1390.10">
    <property type="match status" value="1"/>
</dbReference>
<dbReference type="Gene3D" id="3.40.50.10490">
    <property type="entry name" value="Glucose-6-phosphate isomerase like protein, domain 1"/>
    <property type="match status" value="2"/>
</dbReference>
<dbReference type="HAMAP" id="MF_00473">
    <property type="entry name" value="G6P_isomerase"/>
    <property type="match status" value="1"/>
</dbReference>
<dbReference type="InterPro" id="IPR001672">
    <property type="entry name" value="G6P_Isomerase"/>
</dbReference>
<dbReference type="InterPro" id="IPR023096">
    <property type="entry name" value="G6P_Isomerase_C"/>
</dbReference>
<dbReference type="InterPro" id="IPR018189">
    <property type="entry name" value="Phosphoglucose_isomerase_CS"/>
</dbReference>
<dbReference type="InterPro" id="IPR046348">
    <property type="entry name" value="SIS_dom_sf"/>
</dbReference>
<dbReference type="InterPro" id="IPR035476">
    <property type="entry name" value="SIS_PGI_1"/>
</dbReference>
<dbReference type="InterPro" id="IPR035482">
    <property type="entry name" value="SIS_PGI_2"/>
</dbReference>
<dbReference type="NCBIfam" id="NF001211">
    <property type="entry name" value="PRK00179.1"/>
    <property type="match status" value="1"/>
</dbReference>
<dbReference type="PANTHER" id="PTHR11469">
    <property type="entry name" value="GLUCOSE-6-PHOSPHATE ISOMERASE"/>
    <property type="match status" value="1"/>
</dbReference>
<dbReference type="PANTHER" id="PTHR11469:SF1">
    <property type="entry name" value="GLUCOSE-6-PHOSPHATE ISOMERASE"/>
    <property type="match status" value="1"/>
</dbReference>
<dbReference type="Pfam" id="PF00342">
    <property type="entry name" value="PGI"/>
    <property type="match status" value="1"/>
</dbReference>
<dbReference type="PRINTS" id="PR00662">
    <property type="entry name" value="G6PISOMERASE"/>
</dbReference>
<dbReference type="SUPFAM" id="SSF53697">
    <property type="entry name" value="SIS domain"/>
    <property type="match status" value="1"/>
</dbReference>
<dbReference type="PROSITE" id="PS00765">
    <property type="entry name" value="P_GLUCOSE_ISOMERASE_1"/>
    <property type="match status" value="1"/>
</dbReference>
<dbReference type="PROSITE" id="PS00174">
    <property type="entry name" value="P_GLUCOSE_ISOMERASE_2"/>
    <property type="match status" value="1"/>
</dbReference>
<dbReference type="PROSITE" id="PS51463">
    <property type="entry name" value="P_GLUCOSE_ISOMERASE_3"/>
    <property type="match status" value="1"/>
</dbReference>